<gene>
    <name evidence="1" type="primary">pyrH</name>
    <name type="ordered locus">Moth_1034</name>
</gene>
<feature type="chain" id="PRO_1000053961" description="Uridylate kinase">
    <location>
        <begin position="1"/>
        <end position="240"/>
    </location>
</feature>
<feature type="region of interest" description="Involved in allosteric activation by GTP" evidence="1">
    <location>
        <begin position="20"/>
        <end position="25"/>
    </location>
</feature>
<feature type="binding site" evidence="1">
    <location>
        <begin position="12"/>
        <end position="15"/>
    </location>
    <ligand>
        <name>ATP</name>
        <dbReference type="ChEBI" id="CHEBI:30616"/>
    </ligand>
</feature>
<feature type="binding site" evidence="1">
    <location>
        <position position="54"/>
    </location>
    <ligand>
        <name>UMP</name>
        <dbReference type="ChEBI" id="CHEBI:57865"/>
    </ligand>
</feature>
<feature type="binding site" evidence="1">
    <location>
        <position position="55"/>
    </location>
    <ligand>
        <name>ATP</name>
        <dbReference type="ChEBI" id="CHEBI:30616"/>
    </ligand>
</feature>
<feature type="binding site" evidence="1">
    <location>
        <position position="59"/>
    </location>
    <ligand>
        <name>ATP</name>
        <dbReference type="ChEBI" id="CHEBI:30616"/>
    </ligand>
</feature>
<feature type="binding site" evidence="1">
    <location>
        <position position="74"/>
    </location>
    <ligand>
        <name>UMP</name>
        <dbReference type="ChEBI" id="CHEBI:57865"/>
    </ligand>
</feature>
<feature type="binding site" evidence="1">
    <location>
        <begin position="135"/>
        <end position="142"/>
    </location>
    <ligand>
        <name>UMP</name>
        <dbReference type="ChEBI" id="CHEBI:57865"/>
    </ligand>
</feature>
<feature type="binding site" evidence="1">
    <location>
        <position position="168"/>
    </location>
    <ligand>
        <name>ATP</name>
        <dbReference type="ChEBI" id="CHEBI:30616"/>
    </ligand>
</feature>
<feature type="binding site" evidence="1">
    <location>
        <position position="171"/>
    </location>
    <ligand>
        <name>ATP</name>
        <dbReference type="ChEBI" id="CHEBI:30616"/>
    </ligand>
</feature>
<name>PYRH_MOOTA</name>
<keyword id="KW-0021">Allosteric enzyme</keyword>
<keyword id="KW-0067">ATP-binding</keyword>
<keyword id="KW-0963">Cytoplasm</keyword>
<keyword id="KW-0418">Kinase</keyword>
<keyword id="KW-0547">Nucleotide-binding</keyword>
<keyword id="KW-0665">Pyrimidine biosynthesis</keyword>
<keyword id="KW-0808">Transferase</keyword>
<comment type="function">
    <text evidence="1">Catalyzes the reversible phosphorylation of UMP to UDP.</text>
</comment>
<comment type="catalytic activity">
    <reaction evidence="1">
        <text>UMP + ATP = UDP + ADP</text>
        <dbReference type="Rhea" id="RHEA:24400"/>
        <dbReference type="ChEBI" id="CHEBI:30616"/>
        <dbReference type="ChEBI" id="CHEBI:57865"/>
        <dbReference type="ChEBI" id="CHEBI:58223"/>
        <dbReference type="ChEBI" id="CHEBI:456216"/>
        <dbReference type="EC" id="2.7.4.22"/>
    </reaction>
</comment>
<comment type="activity regulation">
    <text evidence="1">Allosterically activated by GTP. Inhibited by UTP.</text>
</comment>
<comment type="pathway">
    <text evidence="1">Pyrimidine metabolism; CTP biosynthesis via de novo pathway; UDP from UMP (UMPK route): step 1/1.</text>
</comment>
<comment type="subunit">
    <text evidence="1">Homohexamer.</text>
</comment>
<comment type="subcellular location">
    <subcellularLocation>
        <location evidence="1">Cytoplasm</location>
    </subcellularLocation>
</comment>
<comment type="similarity">
    <text evidence="1">Belongs to the UMP kinase family.</text>
</comment>
<reference key="1">
    <citation type="journal article" date="2008" name="Environ. Microbiol.">
        <title>The complete genome sequence of Moorella thermoacetica (f. Clostridium thermoaceticum).</title>
        <authorList>
            <person name="Pierce E."/>
            <person name="Xie G."/>
            <person name="Barabote R.D."/>
            <person name="Saunders E."/>
            <person name="Han C.S."/>
            <person name="Detter J.C."/>
            <person name="Richardson P."/>
            <person name="Brettin T.S."/>
            <person name="Das A."/>
            <person name="Ljungdahl L.G."/>
            <person name="Ragsdale S.W."/>
        </authorList>
    </citation>
    <scope>NUCLEOTIDE SEQUENCE [LARGE SCALE GENOMIC DNA]</scope>
    <source>
        <strain>ATCC 39073 / JCM 9320</strain>
    </source>
</reference>
<sequence length="240" mass="25930">MGQPKYKRVILKISGEALAGNQGFGIDQEVITSIASQIKEVRELGVDVAIVVGGGNIWRGVKGSARGMDRATADYMGMLATVINSLALQDALENQGVDTRVQTAIEMRQIAEPYIRRRAIRHLEKGRVVIFAAGTGNPYFSTDTTAALRAAELEADVILMAKRVDGVYDSDPEINPEAKRLKDLDYLTVLNGGLGVMDSTATSLCMDNHIPIIVFGIKEKGNILKAILGEPIGTYVGRLE</sequence>
<proteinExistence type="inferred from homology"/>
<evidence type="ECO:0000255" key="1">
    <source>
        <dbReference type="HAMAP-Rule" id="MF_01220"/>
    </source>
</evidence>
<organism>
    <name type="scientific">Moorella thermoacetica (strain ATCC 39073 / JCM 9320)</name>
    <dbReference type="NCBI Taxonomy" id="264732"/>
    <lineage>
        <taxon>Bacteria</taxon>
        <taxon>Bacillati</taxon>
        <taxon>Bacillota</taxon>
        <taxon>Clostridia</taxon>
        <taxon>Moorellales</taxon>
        <taxon>Moorellaceae</taxon>
        <taxon>Moorella</taxon>
    </lineage>
</organism>
<accession>Q2RJP1</accession>
<protein>
    <recommendedName>
        <fullName evidence="1">Uridylate kinase</fullName>
        <shortName evidence="1">UK</shortName>
        <ecNumber evidence="1">2.7.4.22</ecNumber>
    </recommendedName>
    <alternativeName>
        <fullName evidence="1">Uridine monophosphate kinase</fullName>
        <shortName evidence="1">UMP kinase</shortName>
        <shortName evidence="1">UMPK</shortName>
    </alternativeName>
</protein>
<dbReference type="EC" id="2.7.4.22" evidence="1"/>
<dbReference type="EMBL" id="CP000232">
    <property type="protein sequence ID" value="ABC19348.1"/>
    <property type="molecule type" value="Genomic_DNA"/>
</dbReference>
<dbReference type="RefSeq" id="YP_429891.1">
    <property type="nucleotide sequence ID" value="NC_007644.1"/>
</dbReference>
<dbReference type="SMR" id="Q2RJP1"/>
<dbReference type="STRING" id="264732.Moth_1034"/>
<dbReference type="EnsemblBacteria" id="ABC19348">
    <property type="protein sequence ID" value="ABC19348"/>
    <property type="gene ID" value="Moth_1034"/>
</dbReference>
<dbReference type="KEGG" id="mta:Moth_1034"/>
<dbReference type="PATRIC" id="fig|264732.11.peg.1114"/>
<dbReference type="eggNOG" id="COG0528">
    <property type="taxonomic scope" value="Bacteria"/>
</dbReference>
<dbReference type="HOGENOM" id="CLU_033861_0_0_9"/>
<dbReference type="OrthoDB" id="9807458at2"/>
<dbReference type="UniPathway" id="UPA00159">
    <property type="reaction ID" value="UER00275"/>
</dbReference>
<dbReference type="GO" id="GO:0005737">
    <property type="term" value="C:cytoplasm"/>
    <property type="evidence" value="ECO:0007669"/>
    <property type="project" value="UniProtKB-SubCell"/>
</dbReference>
<dbReference type="GO" id="GO:0005524">
    <property type="term" value="F:ATP binding"/>
    <property type="evidence" value="ECO:0007669"/>
    <property type="project" value="UniProtKB-KW"/>
</dbReference>
<dbReference type="GO" id="GO:0033862">
    <property type="term" value="F:UMP kinase activity"/>
    <property type="evidence" value="ECO:0007669"/>
    <property type="project" value="UniProtKB-EC"/>
</dbReference>
<dbReference type="GO" id="GO:0044210">
    <property type="term" value="P:'de novo' CTP biosynthetic process"/>
    <property type="evidence" value="ECO:0007669"/>
    <property type="project" value="UniProtKB-UniRule"/>
</dbReference>
<dbReference type="GO" id="GO:0006225">
    <property type="term" value="P:UDP biosynthetic process"/>
    <property type="evidence" value="ECO:0007669"/>
    <property type="project" value="TreeGrafter"/>
</dbReference>
<dbReference type="CDD" id="cd04254">
    <property type="entry name" value="AAK_UMPK-PyrH-Ec"/>
    <property type="match status" value="1"/>
</dbReference>
<dbReference type="FunFam" id="3.40.1160.10:FF:000001">
    <property type="entry name" value="Uridylate kinase"/>
    <property type="match status" value="1"/>
</dbReference>
<dbReference type="Gene3D" id="3.40.1160.10">
    <property type="entry name" value="Acetylglutamate kinase-like"/>
    <property type="match status" value="1"/>
</dbReference>
<dbReference type="HAMAP" id="MF_01220_B">
    <property type="entry name" value="PyrH_B"/>
    <property type="match status" value="1"/>
</dbReference>
<dbReference type="InterPro" id="IPR036393">
    <property type="entry name" value="AceGlu_kinase-like_sf"/>
</dbReference>
<dbReference type="InterPro" id="IPR001048">
    <property type="entry name" value="Asp/Glu/Uridylate_kinase"/>
</dbReference>
<dbReference type="InterPro" id="IPR011817">
    <property type="entry name" value="Uridylate_kinase"/>
</dbReference>
<dbReference type="InterPro" id="IPR015963">
    <property type="entry name" value="Uridylate_kinase_bac"/>
</dbReference>
<dbReference type="NCBIfam" id="TIGR02075">
    <property type="entry name" value="pyrH_bact"/>
    <property type="match status" value="1"/>
</dbReference>
<dbReference type="PANTHER" id="PTHR42833">
    <property type="entry name" value="URIDYLATE KINASE"/>
    <property type="match status" value="1"/>
</dbReference>
<dbReference type="PANTHER" id="PTHR42833:SF4">
    <property type="entry name" value="URIDYLATE KINASE PUMPKIN, CHLOROPLASTIC"/>
    <property type="match status" value="1"/>
</dbReference>
<dbReference type="Pfam" id="PF00696">
    <property type="entry name" value="AA_kinase"/>
    <property type="match status" value="1"/>
</dbReference>
<dbReference type="PIRSF" id="PIRSF005650">
    <property type="entry name" value="Uridylate_kin"/>
    <property type="match status" value="1"/>
</dbReference>
<dbReference type="SUPFAM" id="SSF53633">
    <property type="entry name" value="Carbamate kinase-like"/>
    <property type="match status" value="1"/>
</dbReference>